<keyword id="KW-0167">Capsid protein</keyword>
<keyword id="KW-1185">Reference proteome</keyword>
<keyword id="KW-0946">Virion</keyword>
<evidence type="ECO:0000250" key="1"/>
<evidence type="ECO:0000305" key="2"/>
<organism>
    <name type="scientific">Heliothis virescens ascovirus 3e</name>
    <name type="common">HvAV-3e</name>
    <dbReference type="NCBI Taxonomy" id="260797"/>
    <lineage>
        <taxon>Viruses</taxon>
        <taxon>Varidnaviria</taxon>
        <taxon>Bamfordvirae</taxon>
        <taxon>Nucleocytoviricota</taxon>
        <taxon>Megaviricetes</taxon>
        <taxon>Pimascovirales</taxon>
        <taxon>Ascoviridae</taxon>
        <taxon>Ascovirus</taxon>
        <taxon>Ascovirus TnAV2a</taxon>
    </lineage>
</organism>
<protein>
    <recommendedName>
        <fullName>Major capsid protein</fullName>
    </recommendedName>
</protein>
<accession>A4KXB1</accession>
<accession>Q704X7</accession>
<name>CAPSD_HVAVE</name>
<gene>
    <name type="primary">MCP</name>
    <name type="ORF">ORF56</name>
</gene>
<proteinExistence type="inferred from homology"/>
<organismHost>
    <name type="scientific">Noctuidae</name>
    <name type="common">owlet moths</name>
    <dbReference type="NCBI Taxonomy" id="7100"/>
</organismHost>
<feature type="chain" id="PRO_0000330590" description="Major capsid protein">
    <location>
        <begin position="1"/>
        <end position="455"/>
    </location>
</feature>
<comment type="function">
    <text evidence="1">Major protein of the capsid.</text>
</comment>
<comment type="subcellular location">
    <subcellularLocation>
        <location evidence="1">Virion</location>
    </subcellularLocation>
</comment>
<comment type="similarity">
    <text evidence="2">Belongs to the ascoviridae capsid protein family.</text>
</comment>
<sequence length="455" mass="50070">MTSNPETPVVSNVTLSELRSDVNKRGTIDSYIYGPDEQVTTYFVREIRPCAAFSKMPVLLNTGNGSNKFGGTFTMPINASGDYLLALTAYISISAGKLRSYAAGTESSYFPKLAHKLIKSVRLKVDAKPLVELSSNFMDTWSEFMIDGGNYEAYTNMVGGDFQYSRSVDIGAKTLVLPIPLYFSRDSGVALPIGMMVNNRVTVEFVFRKLSDLLIKENVPDTGAGTGFMNMLTDGDFATPPEITKFEVVADFAVVTDFEIDRTSCSPHYILMEKPTDIAATEILKPTEAGSTLSYDIEHSSGILKALFFGVRNITHSEYLDYYEVGLPKSNNGVRSIGVSALSKIGIKCGDRYRVPMLPAEHFVFTEPYRAACRVPTRNRGQYMYSFALDLKTVDPKGSINPSNFNSSISVVIEPSEALRNSAETFEFTAIALTSYILYIDNGSLKKIDNGGDFN</sequence>
<reference key="1">
    <citation type="journal article" date="2005" name="J. Insect Physiol.">
        <title>Characteristics of pathogenic and mutualistic relationships of ascoviruses in field populations of parasitoid wasps.</title>
        <authorList>
            <person name="Stasiak K."/>
            <person name="Renault S."/>
            <person name="Federici B.A."/>
            <person name="Bigot Y."/>
        </authorList>
    </citation>
    <scope>NUCLEOTIDE SEQUENCE [GENOMIC DNA]</scope>
</reference>
<reference key="2">
    <citation type="journal article" date="2007" name="J. Gen. Virol.">
        <title>Sequence and organization of the Heliothis virescens ascovirus genome.</title>
        <authorList>
            <person name="Asgari S."/>
            <person name="Davis J."/>
            <person name="Wood D."/>
            <person name="Wilson P."/>
            <person name="McGrath A."/>
        </authorList>
    </citation>
    <scope>NUCLEOTIDE SEQUENCE [LARGE SCALE GENOMIC DNA]</scope>
</reference>
<dbReference type="EMBL" id="AJ620612">
    <property type="protein sequence ID" value="CAF05814.2"/>
    <property type="status" value="ALT_SEQ"/>
    <property type="molecule type" value="Genomic_DNA"/>
</dbReference>
<dbReference type="EMBL" id="EF133465">
    <property type="protein sequence ID" value="ABO37242.1"/>
    <property type="molecule type" value="Genomic_DNA"/>
</dbReference>
<dbReference type="RefSeq" id="YP_001110908.1">
    <property type="nucleotide sequence ID" value="NC_009233.1"/>
</dbReference>
<dbReference type="SMR" id="A4KXB1"/>
<dbReference type="KEGG" id="vg:5076108"/>
<dbReference type="OrthoDB" id="5386at10239"/>
<dbReference type="Proteomes" id="UP000001324">
    <property type="component" value="Genome"/>
</dbReference>
<dbReference type="GO" id="GO:0019028">
    <property type="term" value="C:viral capsid"/>
    <property type="evidence" value="ECO:0007669"/>
    <property type="project" value="UniProtKB-KW"/>
</dbReference>
<dbReference type="GO" id="GO:0005198">
    <property type="term" value="F:structural molecule activity"/>
    <property type="evidence" value="ECO:0007669"/>
    <property type="project" value="InterPro"/>
</dbReference>
<dbReference type="Gene3D" id="2.70.9.10">
    <property type="entry name" value="Adenovirus Type 2 Hexon, domain 4"/>
    <property type="match status" value="1"/>
</dbReference>
<dbReference type="Gene3D" id="2.70.9.20">
    <property type="entry name" value="Major capsid protein Vp54"/>
    <property type="match status" value="1"/>
</dbReference>
<dbReference type="InterPro" id="IPR031654">
    <property type="entry name" value="Capsid_N"/>
</dbReference>
<dbReference type="InterPro" id="IPR007542">
    <property type="entry name" value="MCP_C"/>
</dbReference>
<dbReference type="InterPro" id="IPR038519">
    <property type="entry name" value="MCP_C_sf"/>
</dbReference>
<dbReference type="InterPro" id="IPR016112">
    <property type="entry name" value="VP_dsDNA_II"/>
</dbReference>
<dbReference type="Pfam" id="PF16903">
    <property type="entry name" value="Capsid_N"/>
    <property type="match status" value="1"/>
</dbReference>
<dbReference type="Pfam" id="PF04451">
    <property type="entry name" value="Capsid_NCLDV"/>
    <property type="match status" value="1"/>
</dbReference>
<dbReference type="SUPFAM" id="SSF49749">
    <property type="entry name" value="Group II dsDNA viruses VP"/>
    <property type="match status" value="2"/>
</dbReference>